<name>TET12_ARATH</name>
<comment type="function">
    <text evidence="1">May be involved in the regulation of cell differentiation.</text>
</comment>
<comment type="subcellular location">
    <subcellularLocation>
        <location evidence="1">Membrane</location>
        <topology evidence="3">Multi-pass membrane protein</topology>
    </subcellularLocation>
</comment>
<comment type="similarity">
    <text evidence="3">Belongs to the tetraspanin (TM4SF) family.</text>
</comment>
<evidence type="ECO:0000250" key="1"/>
<evidence type="ECO:0000255" key="2"/>
<evidence type="ECO:0000305" key="3"/>
<sequence length="264" mass="29499">MLRLSNAAVITTNAILALIGLAALSFSVYVYVQGPSQCQRFVQNPLIVTAALLFFISSLGLIAALYGSHIIITLYLFFLFLSILLLLVLSVFIFLVTNPTAGKALSGRGIGNVKTGDYQNWIGNHFLRGKNWEGITKCLSDSRVCKRFGPRDIDFDSKHLSNVQFGCCRPPVECGFESKNATWWTVPATATTAIIGDCKAWSNTQRQLCYACESCKIGVLKGIRKRWRILIVVNLLLILLVVFLYSCGCCVRKNNRVPWKRRFF</sequence>
<organism>
    <name type="scientific">Arabidopsis thaliana</name>
    <name type="common">Mouse-ear cress</name>
    <dbReference type="NCBI Taxonomy" id="3702"/>
    <lineage>
        <taxon>Eukaryota</taxon>
        <taxon>Viridiplantae</taxon>
        <taxon>Streptophyta</taxon>
        <taxon>Embryophyta</taxon>
        <taxon>Tracheophyta</taxon>
        <taxon>Spermatophyta</taxon>
        <taxon>Magnoliopsida</taxon>
        <taxon>eudicotyledons</taxon>
        <taxon>Gunneridae</taxon>
        <taxon>Pentapetalae</taxon>
        <taxon>rosids</taxon>
        <taxon>malvids</taxon>
        <taxon>Brassicales</taxon>
        <taxon>Brassicaceae</taxon>
        <taxon>Camelineae</taxon>
        <taxon>Arabidopsis</taxon>
    </lineage>
</organism>
<proteinExistence type="evidence at transcript level"/>
<dbReference type="EMBL" id="AB006708">
    <property type="protein sequence ID" value="BAB09820.1"/>
    <property type="molecule type" value="Genomic_DNA"/>
</dbReference>
<dbReference type="EMBL" id="CP002688">
    <property type="protein sequence ID" value="AED93110.1"/>
    <property type="molecule type" value="Genomic_DNA"/>
</dbReference>
<dbReference type="EMBL" id="BT010941">
    <property type="protein sequence ID" value="AAR24719.1"/>
    <property type="molecule type" value="mRNA"/>
</dbReference>
<dbReference type="EMBL" id="BT011655">
    <property type="protein sequence ID" value="AAS47661.1"/>
    <property type="molecule type" value="mRNA"/>
</dbReference>
<dbReference type="RefSeq" id="NP_197694.1">
    <property type="nucleotide sequence ID" value="NM_122209.4"/>
</dbReference>
<dbReference type="BioGRID" id="17642">
    <property type="interactions" value="1"/>
</dbReference>
<dbReference type="FunCoup" id="Q9FN51">
    <property type="interactions" value="89"/>
</dbReference>
<dbReference type="IntAct" id="Q9FN51">
    <property type="interactions" value="1"/>
</dbReference>
<dbReference type="STRING" id="3702.Q9FN51"/>
<dbReference type="GlyCosmos" id="Q9FN51">
    <property type="glycosylation" value="1 site, No reported glycans"/>
</dbReference>
<dbReference type="GlyGen" id="Q9FN51">
    <property type="glycosylation" value="1 site"/>
</dbReference>
<dbReference type="PaxDb" id="3702-AT5G23030.1"/>
<dbReference type="ProteomicsDB" id="232814"/>
<dbReference type="EnsemblPlants" id="AT5G23030.1">
    <property type="protein sequence ID" value="AT5G23030.1"/>
    <property type="gene ID" value="AT5G23030"/>
</dbReference>
<dbReference type="GeneID" id="832367"/>
<dbReference type="Gramene" id="AT5G23030.1">
    <property type="protein sequence ID" value="AT5G23030.1"/>
    <property type="gene ID" value="AT5G23030"/>
</dbReference>
<dbReference type="KEGG" id="ath:AT5G23030"/>
<dbReference type="Araport" id="AT5G23030"/>
<dbReference type="TAIR" id="AT5G23030">
    <property type="gene designation" value="TET12"/>
</dbReference>
<dbReference type="eggNOG" id="ENOG502QTNI">
    <property type="taxonomic scope" value="Eukaryota"/>
</dbReference>
<dbReference type="HOGENOM" id="CLU_066970_0_0_1"/>
<dbReference type="InParanoid" id="Q9FN51"/>
<dbReference type="OMA" id="QNWIGNH"/>
<dbReference type="PhylomeDB" id="Q9FN51"/>
<dbReference type="PRO" id="PR:Q9FN51"/>
<dbReference type="Proteomes" id="UP000006548">
    <property type="component" value="Chromosome 5"/>
</dbReference>
<dbReference type="ExpressionAtlas" id="Q9FN51">
    <property type="expression patterns" value="baseline and differential"/>
</dbReference>
<dbReference type="GO" id="GO:0016020">
    <property type="term" value="C:membrane"/>
    <property type="evidence" value="ECO:0007669"/>
    <property type="project" value="UniProtKB-SubCell"/>
</dbReference>
<dbReference type="GO" id="GO:0009734">
    <property type="term" value="P:auxin-activated signaling pathway"/>
    <property type="evidence" value="ECO:0007669"/>
    <property type="project" value="InterPro"/>
</dbReference>
<dbReference type="InterPro" id="IPR044991">
    <property type="entry name" value="TET_plant"/>
</dbReference>
<dbReference type="InterPro" id="IPR018499">
    <property type="entry name" value="Tetraspanin/Peripherin"/>
</dbReference>
<dbReference type="PANTHER" id="PTHR32191">
    <property type="entry name" value="TETRASPANIN-8-RELATED"/>
    <property type="match status" value="1"/>
</dbReference>
<dbReference type="Pfam" id="PF00335">
    <property type="entry name" value="Tetraspanin"/>
    <property type="match status" value="1"/>
</dbReference>
<gene>
    <name type="primary">TET12</name>
    <name type="ordered locus">At5g23030</name>
    <name type="ORF">MYJ24.2</name>
</gene>
<accession>Q9FN51</accession>
<feature type="chain" id="PRO_0000421052" description="Tetraspanin-12">
    <location>
        <begin position="1"/>
        <end position="264"/>
    </location>
</feature>
<feature type="topological domain" description="Cytoplasmic" evidence="2">
    <location>
        <begin position="1"/>
        <end position="13"/>
    </location>
</feature>
<feature type="transmembrane region" description="Helical" evidence="2">
    <location>
        <begin position="14"/>
        <end position="34"/>
    </location>
</feature>
<feature type="topological domain" description="Extracellular" evidence="2">
    <location>
        <begin position="35"/>
        <end position="45"/>
    </location>
</feature>
<feature type="transmembrane region" description="Helical" evidence="2">
    <location>
        <begin position="46"/>
        <end position="66"/>
    </location>
</feature>
<feature type="topological domain" description="Cytoplasmic" evidence="2">
    <location>
        <begin position="67"/>
        <end position="75"/>
    </location>
</feature>
<feature type="transmembrane region" description="Helical" evidence="2">
    <location>
        <begin position="76"/>
        <end position="96"/>
    </location>
</feature>
<feature type="topological domain" description="Extracellular" evidence="2">
    <location>
        <begin position="97"/>
        <end position="228"/>
    </location>
</feature>
<feature type="transmembrane region" description="Helical" evidence="2">
    <location>
        <begin position="229"/>
        <end position="249"/>
    </location>
</feature>
<feature type="topological domain" description="Cytoplasmic" evidence="2">
    <location>
        <begin position="250"/>
        <end position="264"/>
    </location>
</feature>
<feature type="glycosylation site" description="N-linked (GlcNAc...) asparagine" evidence="2">
    <location>
        <position position="180"/>
    </location>
</feature>
<reference key="1">
    <citation type="journal article" date="1997" name="DNA Res.">
        <title>Structural analysis of Arabidopsis thaliana chromosome 5. II. Sequence features of the regions of 1,044,062 bp covered by thirteen physically assigned P1 clones.</title>
        <authorList>
            <person name="Kotani H."/>
            <person name="Nakamura Y."/>
            <person name="Sato S."/>
            <person name="Kaneko T."/>
            <person name="Asamizu E."/>
            <person name="Miyajima N."/>
            <person name="Tabata S."/>
        </authorList>
    </citation>
    <scope>NUCLEOTIDE SEQUENCE [LARGE SCALE GENOMIC DNA]</scope>
    <source>
        <strain>cv. Columbia</strain>
    </source>
</reference>
<reference key="2">
    <citation type="journal article" date="2017" name="Plant J.">
        <title>Araport11: a complete reannotation of the Arabidopsis thaliana reference genome.</title>
        <authorList>
            <person name="Cheng C.Y."/>
            <person name="Krishnakumar V."/>
            <person name="Chan A.P."/>
            <person name="Thibaud-Nissen F."/>
            <person name="Schobel S."/>
            <person name="Town C.D."/>
        </authorList>
    </citation>
    <scope>GENOME REANNOTATION</scope>
    <source>
        <strain>cv. Columbia</strain>
    </source>
</reference>
<reference key="3">
    <citation type="submission" date="2004-02" db="EMBL/GenBank/DDBJ databases">
        <title>Arabidopsis ORF clones.</title>
        <authorList>
            <person name="Kim C.J."/>
            <person name="Chen H."/>
            <person name="Cheuk R.F."/>
            <person name="Shinn P."/>
            <person name="Ecker J.R."/>
        </authorList>
    </citation>
    <scope>NUCLEOTIDE SEQUENCE [LARGE SCALE MRNA]</scope>
    <source>
        <strain>cv. Columbia</strain>
    </source>
</reference>
<protein>
    <recommendedName>
        <fullName>Tetraspanin-12</fullName>
    </recommendedName>
</protein>
<keyword id="KW-0325">Glycoprotein</keyword>
<keyword id="KW-0472">Membrane</keyword>
<keyword id="KW-1185">Reference proteome</keyword>
<keyword id="KW-0812">Transmembrane</keyword>
<keyword id="KW-1133">Transmembrane helix</keyword>